<name>SYH_MICLC</name>
<comment type="catalytic activity">
    <reaction evidence="1">
        <text>tRNA(His) + L-histidine + ATP = L-histidyl-tRNA(His) + AMP + diphosphate + H(+)</text>
        <dbReference type="Rhea" id="RHEA:17313"/>
        <dbReference type="Rhea" id="RHEA-COMP:9665"/>
        <dbReference type="Rhea" id="RHEA-COMP:9689"/>
        <dbReference type="ChEBI" id="CHEBI:15378"/>
        <dbReference type="ChEBI" id="CHEBI:30616"/>
        <dbReference type="ChEBI" id="CHEBI:33019"/>
        <dbReference type="ChEBI" id="CHEBI:57595"/>
        <dbReference type="ChEBI" id="CHEBI:78442"/>
        <dbReference type="ChEBI" id="CHEBI:78527"/>
        <dbReference type="ChEBI" id="CHEBI:456215"/>
        <dbReference type="EC" id="6.1.1.21"/>
    </reaction>
</comment>
<comment type="subunit">
    <text evidence="1">Homodimer.</text>
</comment>
<comment type="subcellular location">
    <subcellularLocation>
        <location evidence="1">Cytoplasm</location>
    </subcellularLocation>
</comment>
<comment type="similarity">
    <text evidence="1">Belongs to the class-II aminoacyl-tRNA synthetase family.</text>
</comment>
<proteinExistence type="inferred from homology"/>
<dbReference type="EC" id="6.1.1.21" evidence="1"/>
<dbReference type="EMBL" id="CP001628">
    <property type="protein sequence ID" value="ACS30786.1"/>
    <property type="molecule type" value="Genomic_DNA"/>
</dbReference>
<dbReference type="RefSeq" id="WP_010078579.1">
    <property type="nucleotide sequence ID" value="NC_012803.1"/>
</dbReference>
<dbReference type="SMR" id="C5CCH4"/>
<dbReference type="STRING" id="465515.Mlut_12810"/>
<dbReference type="EnsemblBacteria" id="ACS30786">
    <property type="protein sequence ID" value="ACS30786"/>
    <property type="gene ID" value="Mlut_12810"/>
</dbReference>
<dbReference type="GeneID" id="93345436"/>
<dbReference type="KEGG" id="mlu:Mlut_12810"/>
<dbReference type="PATRIC" id="fig|465515.4.peg.1222"/>
<dbReference type="eggNOG" id="COG0124">
    <property type="taxonomic scope" value="Bacteria"/>
</dbReference>
<dbReference type="HOGENOM" id="CLU_025113_3_0_11"/>
<dbReference type="Proteomes" id="UP000000738">
    <property type="component" value="Chromosome"/>
</dbReference>
<dbReference type="GO" id="GO:0005737">
    <property type="term" value="C:cytoplasm"/>
    <property type="evidence" value="ECO:0007669"/>
    <property type="project" value="UniProtKB-SubCell"/>
</dbReference>
<dbReference type="GO" id="GO:0005524">
    <property type="term" value="F:ATP binding"/>
    <property type="evidence" value="ECO:0007669"/>
    <property type="project" value="UniProtKB-UniRule"/>
</dbReference>
<dbReference type="GO" id="GO:0004821">
    <property type="term" value="F:histidine-tRNA ligase activity"/>
    <property type="evidence" value="ECO:0007669"/>
    <property type="project" value="UniProtKB-UniRule"/>
</dbReference>
<dbReference type="GO" id="GO:0006427">
    <property type="term" value="P:histidyl-tRNA aminoacylation"/>
    <property type="evidence" value="ECO:0007669"/>
    <property type="project" value="UniProtKB-UniRule"/>
</dbReference>
<dbReference type="CDD" id="cd00773">
    <property type="entry name" value="HisRS-like_core"/>
    <property type="match status" value="1"/>
</dbReference>
<dbReference type="Gene3D" id="3.40.50.800">
    <property type="entry name" value="Anticodon-binding domain"/>
    <property type="match status" value="1"/>
</dbReference>
<dbReference type="Gene3D" id="3.30.930.10">
    <property type="entry name" value="Bira Bifunctional Protein, Domain 2"/>
    <property type="match status" value="1"/>
</dbReference>
<dbReference type="HAMAP" id="MF_00127">
    <property type="entry name" value="His_tRNA_synth"/>
    <property type="match status" value="1"/>
</dbReference>
<dbReference type="InterPro" id="IPR006195">
    <property type="entry name" value="aa-tRNA-synth_II"/>
</dbReference>
<dbReference type="InterPro" id="IPR045864">
    <property type="entry name" value="aa-tRNA-synth_II/BPL/LPL"/>
</dbReference>
<dbReference type="InterPro" id="IPR004154">
    <property type="entry name" value="Anticodon-bd"/>
</dbReference>
<dbReference type="InterPro" id="IPR036621">
    <property type="entry name" value="Anticodon-bd_dom_sf"/>
</dbReference>
<dbReference type="InterPro" id="IPR015807">
    <property type="entry name" value="His-tRNA-ligase"/>
</dbReference>
<dbReference type="InterPro" id="IPR041715">
    <property type="entry name" value="HisRS-like_core"/>
</dbReference>
<dbReference type="InterPro" id="IPR004516">
    <property type="entry name" value="HisRS/HisZ"/>
</dbReference>
<dbReference type="NCBIfam" id="TIGR00442">
    <property type="entry name" value="hisS"/>
    <property type="match status" value="1"/>
</dbReference>
<dbReference type="PANTHER" id="PTHR11476:SF7">
    <property type="entry name" value="HISTIDINE--TRNA LIGASE"/>
    <property type="match status" value="1"/>
</dbReference>
<dbReference type="PANTHER" id="PTHR11476">
    <property type="entry name" value="HISTIDYL-TRNA SYNTHETASE"/>
    <property type="match status" value="1"/>
</dbReference>
<dbReference type="Pfam" id="PF03129">
    <property type="entry name" value="HGTP_anticodon"/>
    <property type="match status" value="1"/>
</dbReference>
<dbReference type="Pfam" id="PF13393">
    <property type="entry name" value="tRNA-synt_His"/>
    <property type="match status" value="1"/>
</dbReference>
<dbReference type="PIRSF" id="PIRSF001549">
    <property type="entry name" value="His-tRNA_synth"/>
    <property type="match status" value="1"/>
</dbReference>
<dbReference type="SUPFAM" id="SSF52954">
    <property type="entry name" value="Class II aaRS ABD-related"/>
    <property type="match status" value="1"/>
</dbReference>
<dbReference type="SUPFAM" id="SSF55681">
    <property type="entry name" value="Class II aaRS and biotin synthetases"/>
    <property type="match status" value="1"/>
</dbReference>
<dbReference type="PROSITE" id="PS50862">
    <property type="entry name" value="AA_TRNA_LIGASE_II"/>
    <property type="match status" value="1"/>
</dbReference>
<accession>C5CCH4</accession>
<sequence>MSRKASLSGFHEWLPAERLVEQHVLDTLRRTFELHGFAGIETRAVETLGQLLRKGEVDKEVYAVSRLAEDEEVAAGRREPKDPADPKRLALHFDLTVPFARYVVENAGHLAFPFRRYQMQKVWRGERPQEGRAREFTQADIDVVGDGALSPRYDADVALVMAEALGALPIGDFLIRVNNRKLAEGFYRGIGLEDTAGVLRSIDKLEKVGPEEVARLLQEEVGASPEQAAQALALADIRTSDTSFVERVRALGVTHELLEEGLTELADVVATLHRRAPGRAVADLSIARGLDYYTGTVYETVLVGHEQLGSICSGGRYDALASKGNRVFPGVGLSIGVTRLVMRMLSQQMAVASRSVPTAVYVALTADEDWSEAQDVAALLRERGIPAEVAVSAEKFGRQIKYADRRGIPFVWFMGRDDAGARVHEVKDIRSGEQHAADPADWTPPAEDLLPQVARAQD</sequence>
<gene>
    <name evidence="1" type="primary">hisS</name>
    <name type="ordered locus">Mlut_12810</name>
</gene>
<organism>
    <name type="scientific">Micrococcus luteus (strain ATCC 4698 / DSM 20030 / JCM 1464 / CCM 169 / CCUG 5858 / IAM 1056 / NBRC 3333 / NCIMB 9278 / NCTC 2665 / VKM Ac-2230)</name>
    <name type="common">Micrococcus lysodeikticus</name>
    <dbReference type="NCBI Taxonomy" id="465515"/>
    <lineage>
        <taxon>Bacteria</taxon>
        <taxon>Bacillati</taxon>
        <taxon>Actinomycetota</taxon>
        <taxon>Actinomycetes</taxon>
        <taxon>Micrococcales</taxon>
        <taxon>Micrococcaceae</taxon>
        <taxon>Micrococcus</taxon>
    </lineage>
</organism>
<protein>
    <recommendedName>
        <fullName evidence="1">Histidine--tRNA ligase</fullName>
        <ecNumber evidence="1">6.1.1.21</ecNumber>
    </recommendedName>
    <alternativeName>
        <fullName evidence="1">Histidyl-tRNA synthetase</fullName>
        <shortName evidence="1">HisRS</shortName>
    </alternativeName>
</protein>
<feature type="chain" id="PRO_1000203139" description="Histidine--tRNA ligase">
    <location>
        <begin position="1"/>
        <end position="458"/>
    </location>
</feature>
<keyword id="KW-0030">Aminoacyl-tRNA synthetase</keyword>
<keyword id="KW-0067">ATP-binding</keyword>
<keyword id="KW-0963">Cytoplasm</keyword>
<keyword id="KW-0436">Ligase</keyword>
<keyword id="KW-0547">Nucleotide-binding</keyword>
<keyword id="KW-0648">Protein biosynthesis</keyword>
<keyword id="KW-1185">Reference proteome</keyword>
<reference key="1">
    <citation type="journal article" date="2010" name="J. Bacteriol.">
        <title>Genome sequence of the Fleming strain of Micrococcus luteus, a simple free-living actinobacterium.</title>
        <authorList>
            <person name="Young M."/>
            <person name="Artsatbanov V."/>
            <person name="Beller H.R."/>
            <person name="Chandra G."/>
            <person name="Chater K.F."/>
            <person name="Dover L.G."/>
            <person name="Goh E.B."/>
            <person name="Kahan T."/>
            <person name="Kaprelyants A.S."/>
            <person name="Kyrpides N."/>
            <person name="Lapidus A."/>
            <person name="Lowry S.R."/>
            <person name="Lykidis A."/>
            <person name="Mahillon J."/>
            <person name="Markowitz V."/>
            <person name="Mavromatis K."/>
            <person name="Mukamolova G.V."/>
            <person name="Oren A."/>
            <person name="Rokem J.S."/>
            <person name="Smith M.C."/>
            <person name="Young D.I."/>
            <person name="Greenblatt C.L."/>
        </authorList>
    </citation>
    <scope>NUCLEOTIDE SEQUENCE [LARGE SCALE GENOMIC DNA]</scope>
    <source>
        <strain>ATCC 4698 / DSM 20030 / JCM 1464 / CCM 169 / CCUG 5858 / IAM 1056 / NBRC 3333 / NCIMB 9278 / NCTC 2665 / VKM Ac-2230</strain>
    </source>
</reference>
<evidence type="ECO:0000255" key="1">
    <source>
        <dbReference type="HAMAP-Rule" id="MF_00127"/>
    </source>
</evidence>